<dbReference type="EMBL" id="LC646903">
    <property type="protein sequence ID" value="BDA39146.1"/>
    <property type="molecule type" value="Genomic_DNA"/>
</dbReference>
<dbReference type="GO" id="GO:0016020">
    <property type="term" value="C:membrane"/>
    <property type="evidence" value="ECO:0007669"/>
    <property type="project" value="UniProtKB-SubCell"/>
</dbReference>
<dbReference type="InterPro" id="IPR053008">
    <property type="entry name" value="Phomopsin_biosynth_assoc"/>
</dbReference>
<dbReference type="PANTHER" id="PTHR35896">
    <property type="entry name" value="IG-LIKE DOMAIN-CONTAINING PROTEIN"/>
    <property type="match status" value="1"/>
</dbReference>
<dbReference type="PANTHER" id="PTHR35896:SF3">
    <property type="entry name" value="MAJOR FACILITATOR SUPERFAMILY TRANSPORTER"/>
    <property type="match status" value="1"/>
</dbReference>
<comment type="function">
    <text evidence="4 6">Part of the gene cluster that mediates the biosynthesis of the phomopsins, a group of hexapeptide mycotoxins which infects lupins and causes lupinosis disease in livestock (PubMed:34608734). The role of phomB within the phomopsins biosynthesis pathway has still to be determined (Probable). The pathway starts with the processing of the precursor phomA by several endopeptidases including kexin proteases as well as the cluster-specific S41 family peptidase phomP1 and the oligopeptidase phomG to produce 10 identical copies of the hexapeptide Tyr-Val-Ile-Pro-Ile-Asp. After being excised from the precursor peptide, the core peptides are cyclized and modified post-translationally by enzymes encoded within the gene cluster. The timing and order of proteolysis of the phomA precursor and PTMs are still unknown. Two tyrosinase-like enzymes, phomQ1 and phomQ2, catalyze the chlorination and hydroxylation of Tyr, respectively. PhomYb, is proposed to be involved in the construction of the macrocyclic structure. The other 4 ustYa family proteins may be involved in PTMs that generate the unique structure of phomopsin A. PhomYa is required for the hydroxylation of C-beta of Tyr. PhomYc, phomYd, and phomYe are responsible for the biosynthesis of 2,3-dehydroisoleucine (dIle), 2,3-dehydroaspartic acid (dAsp), and 3,4-dehydroproline (dPro), respectively. While dIle formation by phomYc is indispensable for the installation of dAsp by phomYd, the order of the other PTMs have not been elucidated yet. Most of the biosynthetic enzymes likely have broad substrate specificity, and thus, there might be a metabolic grid from a precursor to phomopsin A. The enzyme(s) responsible for the biosynthesis of 3,4-dehydrovaline (dVal) have also not been identified yet. Finally, phomM acts as an S-adenosylmethionine-dependent alpha-N-methyltransferase that catalyzes two successive N-methylation reactions, converting N-desmethyl-phomopsin A to phomopsin A and phomopsin A further to an N,N-dimethylated congener called phomopsin E (Probable).</text>
</comment>
<comment type="subcellular location">
    <subcellularLocation>
        <location evidence="1">Membrane</location>
        <topology evidence="1">Single-pass membrane protein</topology>
    </subcellularLocation>
</comment>
<gene>
    <name evidence="5" type="primary">phomB</name>
</gene>
<name>PHOB1_DIALO</name>
<sequence>MESIAKAKSLPNKGRTYDSQRPWNRDSPFSFAAWWSTPSTRYLKVDQPSGRDEHDSLDLEDEDVSKYLASHRERQKRRASCAAKAKVLIIGCAVISLFAIIGALGFALGRRATLPGSCASPAHQNPHTPPHPRPTKGEAHDAGHSGSHSSSSSTNNHHHSHDDSPPPPHVGIDKPKQCGESPDEAQSRGCIFEPQLTAWVAPECAFPAVVAEYQDAVGDMMTEWPWFWDTGLQKAVSPEEFPSLQAGNYSVVYTPYQASHALHCLYCWRKVSYALEHGVDWMDARCHQFYHQRHCAFFIADKLLEMEDWRAAAEVDVQGRLTTWTYPLLYHNCVPLSSTMES</sequence>
<accession>A0A8J9WJ26</accession>
<organism>
    <name type="scientific">Diaporthe leptostromiformis</name>
    <name type="common">Lupinosis disease fungus</name>
    <name type="synonym">Phomopsis leptostromiformis</name>
    <dbReference type="NCBI Taxonomy" id="291059"/>
    <lineage>
        <taxon>Eukaryota</taxon>
        <taxon>Fungi</taxon>
        <taxon>Dikarya</taxon>
        <taxon>Ascomycota</taxon>
        <taxon>Pezizomycotina</taxon>
        <taxon>Sordariomycetes</taxon>
        <taxon>Sordariomycetidae</taxon>
        <taxon>Diaporthales</taxon>
        <taxon>Diaporthaceae</taxon>
        <taxon>Diaporthe</taxon>
    </lineage>
</organism>
<keyword id="KW-0325">Glycoprotein</keyword>
<keyword id="KW-0472">Membrane</keyword>
<keyword id="KW-0812">Transmembrane</keyword>
<keyword id="KW-1133">Transmembrane helix</keyword>
<keyword id="KW-0843">Virulence</keyword>
<evidence type="ECO:0000255" key="1"/>
<evidence type="ECO:0000255" key="2">
    <source>
        <dbReference type="PROSITE-ProRule" id="PRU00498"/>
    </source>
</evidence>
<evidence type="ECO:0000256" key="3">
    <source>
        <dbReference type="SAM" id="MobiDB-lite"/>
    </source>
</evidence>
<evidence type="ECO:0000269" key="4">
    <source>
    </source>
</evidence>
<evidence type="ECO:0000303" key="5">
    <source>
    </source>
</evidence>
<evidence type="ECO:0000305" key="6">
    <source>
    </source>
</evidence>
<feature type="chain" id="PRO_0000458400" description="Phomopsin biosynthesis cluster protein B">
    <location>
        <begin position="1"/>
        <end position="342"/>
    </location>
</feature>
<feature type="transmembrane region" description="Helical" evidence="1">
    <location>
        <begin position="87"/>
        <end position="107"/>
    </location>
</feature>
<feature type="region of interest" description="Disordered" evidence="3">
    <location>
        <begin position="1"/>
        <end position="22"/>
    </location>
</feature>
<feature type="region of interest" description="Disordered" evidence="3">
    <location>
        <begin position="118"/>
        <end position="186"/>
    </location>
</feature>
<feature type="compositionally biased region" description="Low complexity" evidence="3">
    <location>
        <begin position="144"/>
        <end position="155"/>
    </location>
</feature>
<feature type="glycosylation site" description="N-linked (GlcNAc...) asparagine" evidence="2">
    <location>
        <position position="248"/>
    </location>
</feature>
<reference key="1">
    <citation type="journal article" date="2021" name="Angew. Chem. Int. Ed.">
        <title>Biosynthetic studies of phomopsins unveil posttranslational installation of dehydroamino acids by ustYa family proteins.</title>
        <authorList>
            <person name="Sogahata K."/>
            <person name="Ozaki T."/>
            <person name="Igarashi Y."/>
            <person name="Naganuma Y."/>
            <person name="Liu C."/>
            <person name="Minami A."/>
            <person name="Oikawa H."/>
        </authorList>
    </citation>
    <scope>NUCLEOTIDE SEQUENCE [GENOMIC DNA]</scope>
    <scope>FUNCTION</scope>
    <source>
        <strain>ATCC 26115 / IMI 115107 / C 1557</strain>
    </source>
</reference>
<protein>
    <recommendedName>
        <fullName evidence="5">Phomopsin biosynthesis cluster protein B</fullName>
    </recommendedName>
</protein>
<proteinExistence type="inferred from homology"/>